<dbReference type="EC" id="2.7.1.48" evidence="1"/>
<dbReference type="EMBL" id="CP000647">
    <property type="protein sequence ID" value="ABR77937.1"/>
    <property type="molecule type" value="Genomic_DNA"/>
</dbReference>
<dbReference type="RefSeq" id="WP_002912442.1">
    <property type="nucleotide sequence ID" value="NC_009648.1"/>
</dbReference>
<dbReference type="SMR" id="A6TBG6"/>
<dbReference type="STRING" id="272620.KPN_02519"/>
<dbReference type="PaxDb" id="272620-KPN_02519"/>
<dbReference type="EnsemblBacteria" id="ABR77937">
    <property type="protein sequence ID" value="ABR77937"/>
    <property type="gene ID" value="KPN_02519"/>
</dbReference>
<dbReference type="GeneID" id="93272250"/>
<dbReference type="KEGG" id="kpn:KPN_02519"/>
<dbReference type="HOGENOM" id="CLU_021278_1_2_6"/>
<dbReference type="UniPathway" id="UPA00574">
    <property type="reaction ID" value="UER00637"/>
</dbReference>
<dbReference type="UniPathway" id="UPA00579">
    <property type="reaction ID" value="UER00640"/>
</dbReference>
<dbReference type="Proteomes" id="UP000000265">
    <property type="component" value="Chromosome"/>
</dbReference>
<dbReference type="GO" id="GO:0005737">
    <property type="term" value="C:cytoplasm"/>
    <property type="evidence" value="ECO:0007669"/>
    <property type="project" value="UniProtKB-SubCell"/>
</dbReference>
<dbReference type="GO" id="GO:0005524">
    <property type="term" value="F:ATP binding"/>
    <property type="evidence" value="ECO:0007669"/>
    <property type="project" value="UniProtKB-UniRule"/>
</dbReference>
<dbReference type="GO" id="GO:0043771">
    <property type="term" value="F:cytidine kinase activity"/>
    <property type="evidence" value="ECO:0007669"/>
    <property type="project" value="RHEA"/>
</dbReference>
<dbReference type="GO" id="GO:0004849">
    <property type="term" value="F:uridine kinase activity"/>
    <property type="evidence" value="ECO:0007669"/>
    <property type="project" value="UniProtKB-UniRule"/>
</dbReference>
<dbReference type="GO" id="GO:0044211">
    <property type="term" value="P:CTP salvage"/>
    <property type="evidence" value="ECO:0007669"/>
    <property type="project" value="UniProtKB-UniRule"/>
</dbReference>
<dbReference type="GO" id="GO:0044206">
    <property type="term" value="P:UMP salvage"/>
    <property type="evidence" value="ECO:0007669"/>
    <property type="project" value="UniProtKB-UniRule"/>
</dbReference>
<dbReference type="CDD" id="cd02023">
    <property type="entry name" value="UMPK"/>
    <property type="match status" value="1"/>
</dbReference>
<dbReference type="FunFam" id="3.40.50.300:FF:000252">
    <property type="entry name" value="Uridine kinase"/>
    <property type="match status" value="1"/>
</dbReference>
<dbReference type="Gene3D" id="3.40.50.300">
    <property type="entry name" value="P-loop containing nucleotide triphosphate hydrolases"/>
    <property type="match status" value="1"/>
</dbReference>
<dbReference type="HAMAP" id="MF_00551">
    <property type="entry name" value="Uridine_kinase"/>
    <property type="match status" value="1"/>
</dbReference>
<dbReference type="InterPro" id="IPR027417">
    <property type="entry name" value="P-loop_NTPase"/>
</dbReference>
<dbReference type="InterPro" id="IPR006083">
    <property type="entry name" value="PRK/URK"/>
</dbReference>
<dbReference type="InterPro" id="IPR026008">
    <property type="entry name" value="Uridine_kinase"/>
</dbReference>
<dbReference type="InterPro" id="IPR000764">
    <property type="entry name" value="Uridine_kinase-like"/>
</dbReference>
<dbReference type="NCBIfam" id="NF004018">
    <property type="entry name" value="PRK05480.1"/>
    <property type="match status" value="1"/>
</dbReference>
<dbReference type="NCBIfam" id="TIGR00235">
    <property type="entry name" value="udk"/>
    <property type="match status" value="1"/>
</dbReference>
<dbReference type="PANTHER" id="PTHR10285">
    <property type="entry name" value="URIDINE KINASE"/>
    <property type="match status" value="1"/>
</dbReference>
<dbReference type="Pfam" id="PF00485">
    <property type="entry name" value="PRK"/>
    <property type="match status" value="1"/>
</dbReference>
<dbReference type="PRINTS" id="PR00988">
    <property type="entry name" value="URIDINKINASE"/>
</dbReference>
<dbReference type="SUPFAM" id="SSF52540">
    <property type="entry name" value="P-loop containing nucleoside triphosphate hydrolases"/>
    <property type="match status" value="1"/>
</dbReference>
<organism>
    <name type="scientific">Klebsiella pneumoniae subsp. pneumoniae (strain ATCC 700721 / MGH 78578)</name>
    <dbReference type="NCBI Taxonomy" id="272620"/>
    <lineage>
        <taxon>Bacteria</taxon>
        <taxon>Pseudomonadati</taxon>
        <taxon>Pseudomonadota</taxon>
        <taxon>Gammaproteobacteria</taxon>
        <taxon>Enterobacterales</taxon>
        <taxon>Enterobacteriaceae</taxon>
        <taxon>Klebsiella/Raoultella group</taxon>
        <taxon>Klebsiella</taxon>
        <taxon>Klebsiella pneumoniae complex</taxon>
    </lineage>
</organism>
<feature type="chain" id="PRO_1000017881" description="Uridine kinase">
    <location>
        <begin position="1"/>
        <end position="213"/>
    </location>
</feature>
<feature type="binding site" evidence="1">
    <location>
        <begin position="15"/>
        <end position="22"/>
    </location>
    <ligand>
        <name>ATP</name>
        <dbReference type="ChEBI" id="CHEBI:30616"/>
    </ligand>
</feature>
<accession>A6TBG6</accession>
<protein>
    <recommendedName>
        <fullName evidence="1">Uridine kinase</fullName>
        <ecNumber evidence="1">2.7.1.48</ecNumber>
    </recommendedName>
    <alternativeName>
        <fullName evidence="1">Cytidine monophosphokinase</fullName>
    </alternativeName>
    <alternativeName>
        <fullName evidence="1">Uridine monophosphokinase</fullName>
    </alternativeName>
</protein>
<gene>
    <name evidence="1" type="primary">udk</name>
    <name type="ordered locus">KPN78578_24760</name>
    <name type="ORF">KPN_02519</name>
</gene>
<name>URK_KLEP7</name>
<comment type="catalytic activity">
    <reaction evidence="1">
        <text>uridine + ATP = UMP + ADP + H(+)</text>
        <dbReference type="Rhea" id="RHEA:16825"/>
        <dbReference type="ChEBI" id="CHEBI:15378"/>
        <dbReference type="ChEBI" id="CHEBI:16704"/>
        <dbReference type="ChEBI" id="CHEBI:30616"/>
        <dbReference type="ChEBI" id="CHEBI:57865"/>
        <dbReference type="ChEBI" id="CHEBI:456216"/>
        <dbReference type="EC" id="2.7.1.48"/>
    </reaction>
</comment>
<comment type="catalytic activity">
    <reaction evidence="1">
        <text>cytidine + ATP = CMP + ADP + H(+)</text>
        <dbReference type="Rhea" id="RHEA:24674"/>
        <dbReference type="ChEBI" id="CHEBI:15378"/>
        <dbReference type="ChEBI" id="CHEBI:17562"/>
        <dbReference type="ChEBI" id="CHEBI:30616"/>
        <dbReference type="ChEBI" id="CHEBI:60377"/>
        <dbReference type="ChEBI" id="CHEBI:456216"/>
        <dbReference type="EC" id="2.7.1.48"/>
    </reaction>
</comment>
<comment type="pathway">
    <text evidence="1">Pyrimidine metabolism; CTP biosynthesis via salvage pathway; CTP from cytidine: step 1/3.</text>
</comment>
<comment type="pathway">
    <text evidence="1">Pyrimidine metabolism; UMP biosynthesis via salvage pathway; UMP from uridine: step 1/1.</text>
</comment>
<comment type="subcellular location">
    <subcellularLocation>
        <location evidence="1">Cytoplasm</location>
    </subcellularLocation>
</comment>
<comment type="similarity">
    <text evidence="1">Belongs to the uridine kinase family.</text>
</comment>
<proteinExistence type="inferred from homology"/>
<evidence type="ECO:0000255" key="1">
    <source>
        <dbReference type="HAMAP-Rule" id="MF_00551"/>
    </source>
</evidence>
<reference key="1">
    <citation type="submission" date="2006-09" db="EMBL/GenBank/DDBJ databases">
        <authorList>
            <consortium name="The Klebsiella pneumonia Genome Sequencing Project"/>
            <person name="McClelland M."/>
            <person name="Sanderson E.K."/>
            <person name="Spieth J."/>
            <person name="Clifton W.S."/>
            <person name="Latreille P."/>
            <person name="Sabo A."/>
            <person name="Pepin K."/>
            <person name="Bhonagiri V."/>
            <person name="Porwollik S."/>
            <person name="Ali J."/>
            <person name="Wilson R.K."/>
        </authorList>
    </citation>
    <scope>NUCLEOTIDE SEQUENCE [LARGE SCALE GENOMIC DNA]</scope>
    <source>
        <strain>ATCC 700721 / MGH 78578</strain>
    </source>
</reference>
<sequence>MTDMSHQCVIVGIAGASASGKSLIASTLYRELREQVGDEHIGVIPEDSYYKDQSHLSMEERVKTNYDHPSSMDHSLLFQHLQMLKSGQPIELPVYSYVEHTRTPNTIHVEPKKVIILEGILLLTDARLRNELNFSIFVDTPLDICLMRRIKRDVNERGRSMDSVMAQYQKTVRPMFLQFIEPSKQYADIIVPRGGKNRIAIDILKAKISQFFE</sequence>
<keyword id="KW-0067">ATP-binding</keyword>
<keyword id="KW-0963">Cytoplasm</keyword>
<keyword id="KW-0418">Kinase</keyword>
<keyword id="KW-0547">Nucleotide-binding</keyword>
<keyword id="KW-0808">Transferase</keyword>